<accession>A0A9P4XWM4</accession>
<name>YTH1_CRYP1</name>
<keyword id="KW-1185">Reference proteome</keyword>
<comment type="function">
    <text evidence="3">Specifically recognizes and binds N6-methyladenosine (m6A)-containing mRNAs, and regulates their stability (PubMed:39159278). M6A is a modification present at internal sites of mRNAs and some non-coding RNAs and plays a role in mRNA stability and processing (PubMed:39159278). Directly interacts with the acid phosphatase APHA mRNA to increase its stability (PubMed:39159278).</text>
</comment>
<comment type="disruption phenotype">
    <text evidence="3">Significantly shortens the half-life time of the APHA mRNA and decreases the APHA protein expression.</text>
</comment>
<comment type="similarity">
    <text evidence="5">Belongs to the YTHDF family. YTHDF1 subfamily.</text>
</comment>
<feature type="chain" id="PRO_0000462150" description="YTH domain-containing family protein 1">
    <location>
        <begin position="1"/>
        <end position="549"/>
    </location>
</feature>
<feature type="domain" description="YTH" evidence="1">
    <location>
        <begin position="307"/>
        <end position="513"/>
    </location>
</feature>
<feature type="region of interest" description="Disordered" evidence="2">
    <location>
        <begin position="29"/>
        <end position="102"/>
    </location>
</feature>
<feature type="region of interest" description="Disordered" evidence="2">
    <location>
        <begin position="139"/>
        <end position="165"/>
    </location>
</feature>
<feature type="region of interest" description="Disordered" evidence="2">
    <location>
        <begin position="243"/>
        <end position="262"/>
    </location>
</feature>
<feature type="region of interest" description="Disordered" evidence="2">
    <location>
        <begin position="273"/>
        <end position="298"/>
    </location>
</feature>
<feature type="region of interest" description="Disordered" evidence="2">
    <location>
        <begin position="425"/>
        <end position="458"/>
    </location>
</feature>
<feature type="compositionally biased region" description="Polar residues" evidence="2">
    <location>
        <begin position="49"/>
        <end position="61"/>
    </location>
</feature>
<feature type="compositionally biased region" description="Low complexity" evidence="2">
    <location>
        <begin position="71"/>
        <end position="102"/>
    </location>
</feature>
<feature type="compositionally biased region" description="Polar residues" evidence="2">
    <location>
        <begin position="251"/>
        <end position="260"/>
    </location>
</feature>
<feature type="compositionally biased region" description="Polar residues" evidence="2">
    <location>
        <begin position="273"/>
        <end position="289"/>
    </location>
</feature>
<proteinExistence type="inferred from homology"/>
<dbReference type="EMBL" id="MU032350">
    <property type="protein sequence ID" value="KAF3762299.1"/>
    <property type="molecule type" value="Genomic_DNA"/>
</dbReference>
<dbReference type="SMR" id="A0A9P4XWM4"/>
<dbReference type="Proteomes" id="UP000803844">
    <property type="component" value="Unassembled WGS sequence"/>
</dbReference>
<dbReference type="GO" id="GO:0005654">
    <property type="term" value="C:nucleoplasm"/>
    <property type="evidence" value="ECO:0007669"/>
    <property type="project" value="TreeGrafter"/>
</dbReference>
<dbReference type="GO" id="GO:0003729">
    <property type="term" value="F:mRNA binding"/>
    <property type="evidence" value="ECO:0007669"/>
    <property type="project" value="TreeGrafter"/>
</dbReference>
<dbReference type="GO" id="GO:1990247">
    <property type="term" value="F:N6-methyladenosine-containing RNA reader activity"/>
    <property type="evidence" value="ECO:0007669"/>
    <property type="project" value="TreeGrafter"/>
</dbReference>
<dbReference type="GO" id="GO:0000398">
    <property type="term" value="P:mRNA splicing, via spliceosome"/>
    <property type="evidence" value="ECO:0007669"/>
    <property type="project" value="TreeGrafter"/>
</dbReference>
<dbReference type="GO" id="GO:0000381">
    <property type="term" value="P:regulation of alternative mRNA splicing, via spliceosome"/>
    <property type="evidence" value="ECO:0007669"/>
    <property type="project" value="TreeGrafter"/>
</dbReference>
<dbReference type="CDD" id="cd00590">
    <property type="entry name" value="RRM_SF"/>
    <property type="match status" value="1"/>
</dbReference>
<dbReference type="CDD" id="cd21134">
    <property type="entry name" value="YTH"/>
    <property type="match status" value="1"/>
</dbReference>
<dbReference type="Gene3D" id="3.30.70.330">
    <property type="match status" value="1"/>
</dbReference>
<dbReference type="Gene3D" id="3.10.590.10">
    <property type="entry name" value="ph1033 like domains"/>
    <property type="match status" value="1"/>
</dbReference>
<dbReference type="InterPro" id="IPR012677">
    <property type="entry name" value="Nucleotide-bd_a/b_plait_sf"/>
</dbReference>
<dbReference type="InterPro" id="IPR035979">
    <property type="entry name" value="RBD_domain_sf"/>
</dbReference>
<dbReference type="InterPro" id="IPR007275">
    <property type="entry name" value="YTH_domain"/>
</dbReference>
<dbReference type="InterPro" id="IPR045168">
    <property type="entry name" value="YTH_prot"/>
</dbReference>
<dbReference type="PANTHER" id="PTHR12357:SF3">
    <property type="entry name" value="YTH DOMAIN-CONTAINING PROTEIN 1"/>
    <property type="match status" value="1"/>
</dbReference>
<dbReference type="PANTHER" id="PTHR12357">
    <property type="entry name" value="YTH YT521-B HOMOLOGY DOMAIN-CONTAINING"/>
    <property type="match status" value="1"/>
</dbReference>
<dbReference type="Pfam" id="PF04146">
    <property type="entry name" value="YTH"/>
    <property type="match status" value="1"/>
</dbReference>
<dbReference type="SUPFAM" id="SSF54928">
    <property type="entry name" value="RNA-binding domain, RBD"/>
    <property type="match status" value="1"/>
</dbReference>
<dbReference type="PROSITE" id="PS50882">
    <property type="entry name" value="YTH"/>
    <property type="match status" value="1"/>
</dbReference>
<sequence>MSQSQVPSRAGHYNMTALANALPQANYRQAPWNNGSQMRYNPAGASPNVVGQTQSSPQYNGQPGMGSMPNQGYYMPQQQQQQQQMPQYYGGPMSPSQPQPNMSSRPNVPFYGNQVMSNHQAHPSMGYYYAQVPAYALQGHPPHQAPVDSQSNVVRGPPRKPRQSGHAIWIGNLPSQTDLMSLVHHVCREAQGLESLFLISKSNCAFANFRDEASCLTAQQKLHESKFQSVRLVSRLRKNTVEGASGITAPTGPSATTPQQAVAPEVKEIEQIDSTETQSDNADTDTPTAVGTPDAKGPAVVDAAQKDRFFVLKSLTVEDLDLSVRTGIWATQSHNEEALNSAFKNAENVYLVFSANKSGEYFGYARMVSTINEDPAAAIEFAPKAQSVNEVDLPREIPTEPTKFTPKGRIIDDSARGTIFWEIAREDSSEGVTQEEPAPAVAEQDDTTGGLDGNSENKTWGKPFKLEWLSTTRLPFYRCRGLRNPWNSNREVKIARDGTELEPSVGRRLIGLFNRSHNSPGPRGPMMGMGQMMSPSQQQMPMGYPPPYS</sequence>
<gene>
    <name evidence="4" type="primary">YTH1</name>
    <name type="ORF">M406DRAFT_352687</name>
</gene>
<protein>
    <recommendedName>
        <fullName evidence="4">YTH domain-containing family protein 1</fullName>
    </recommendedName>
    <alternativeName>
        <fullName evidence="4">M6A reader YTH1</fullName>
    </alternativeName>
</protein>
<reference key="1">
    <citation type="journal article" date="2020" name="Phytopathology">
        <title>Genome sequence of the chestnut blight fungus Cryphonectria parasitica EP155: A fundamental resource for an archetypical invasive plant pathogen.</title>
        <authorList>
            <person name="Crouch J.A."/>
            <person name="Dawe A."/>
            <person name="Aerts A."/>
            <person name="Barry K."/>
            <person name="Churchill A.C.L."/>
            <person name="Grimwood J."/>
            <person name="Hillman B."/>
            <person name="Milgroom M.G."/>
            <person name="Pangilinan J."/>
            <person name="Smith M."/>
            <person name="Salamov A."/>
            <person name="Schmutz J."/>
            <person name="Yadav J."/>
            <person name="Grigoriev I.V."/>
            <person name="Nuss D."/>
        </authorList>
    </citation>
    <scope>NUCLEOTIDE SEQUENCE [LARGE SCALE GENOMIC DNA]</scope>
    <source>
        <strain>ATCC 38755 / EP155</strain>
    </source>
</reference>
<reference key="2">
    <citation type="journal article" date="2024" name="PLoS Pathog.">
        <title>N6-methyladenosine RNA methyltransferase CpMTA1 mediates CpAphA mRNA stability through a YTHDF1-dependent m6A modification in the chestnut blight fungus.</title>
        <authorList>
            <person name="Zhao L."/>
            <person name="Wei X."/>
            <person name="Chen F."/>
            <person name="Yuan L."/>
            <person name="Chen B."/>
            <person name="Li R."/>
        </authorList>
    </citation>
    <scope>FUNCTION</scope>
    <scope>DISRUPTION PHENOTYPE</scope>
</reference>
<organism>
    <name type="scientific">Cryphonectria parasitica (strain ATCC 38755 / EP155)</name>
    <dbReference type="NCBI Taxonomy" id="660469"/>
    <lineage>
        <taxon>Eukaryota</taxon>
        <taxon>Fungi</taxon>
        <taxon>Dikarya</taxon>
        <taxon>Ascomycota</taxon>
        <taxon>Pezizomycotina</taxon>
        <taxon>Sordariomycetes</taxon>
        <taxon>Sordariomycetidae</taxon>
        <taxon>Diaporthales</taxon>
        <taxon>Cryphonectriaceae</taxon>
        <taxon>Cryphonectria-Endothia species complex</taxon>
        <taxon>Cryphonectria</taxon>
    </lineage>
</organism>
<evidence type="ECO:0000255" key="1">
    <source>
        <dbReference type="PROSITE-ProRule" id="PRU00225"/>
    </source>
</evidence>
<evidence type="ECO:0000256" key="2">
    <source>
        <dbReference type="SAM" id="MobiDB-lite"/>
    </source>
</evidence>
<evidence type="ECO:0000269" key="3">
    <source>
    </source>
</evidence>
<evidence type="ECO:0000303" key="4">
    <source>
    </source>
</evidence>
<evidence type="ECO:0000305" key="5"/>